<comment type="function">
    <molecule>Capsid protein C</molecule>
    <text evidence="5 11">Plays a role in virus budding by binding to the cell membrane and gathering the viral RNA into a nucleocapsid that forms the core of a mature virus particle. During virus entry, may induce genome penetration into the host cytoplasm after hemifusion induced by the surface proteins. Can migrate to the cell nucleus where it modulates host functions. Overcomes the anti-viral effects of host EXOC1 by sequestering and degrading the latter through the proteasome degradation pathway (By similarity). Inhibits the integrated stress response (ISR) in the infected cell by binding to host CAPRIN1 (PubMed:23097442).</text>
</comment>
<comment type="function">
    <molecule>Capsid protein C</molecule>
    <text evidence="1">Inhibits RNA silencing by interfering with host Dicer.</text>
</comment>
<comment type="function">
    <molecule>Peptide pr</molecule>
    <text evidence="5">Prevents premature fusion activity of envelope proteins in trans-Golgi by binding to envelope protein E at pH6.0. After virion release in extracellular space, gets dissociated from E dimers.</text>
</comment>
<comment type="function">
    <molecule>Protein prM</molecule>
    <text evidence="5">Acts as a chaperone for envelope protein E during intracellular virion assembly by masking and inactivating envelope protein E fusion peptide. prM is the only viral peptide matured by host furin in the trans-Golgi network probably to avoid catastrophic activation of the viral fusion activity in acidic Golgi compartment prior to virion release. prM-E cleavage is inefficient, and many virions are only partially matured. These uncleaved prM would play a role in immune evasion.</text>
</comment>
<comment type="function">
    <molecule>Small envelope protein M</molecule>
    <text evidence="5">May play a role in virus budding. Exerts cytotoxic effects by activating a mitochondrial apoptotic pathway through M ectodomain. May display a viroporin activity.</text>
</comment>
<comment type="function">
    <molecule>Envelope protein E</molecule>
    <text evidence="5">Binds to host cell surface receptor and mediates fusion between viral and cellular membranes. Envelope protein is synthesized in the endoplasmic reticulum in the form of heterodimer with protein prM. They play a role in virion budding in the ER, and the newly formed immature particle is covered with 60 spikes composed of heterodimer between precursor prM and envelope protein E. The virion is transported to the Golgi apparatus where the low pH causes dissociation of PrM-E heterodimers and formation of E homodimers. prM-E cleavage is inefficient, and many virions are only partially matured. These uncleaved prM would play a role in immune evasion.</text>
</comment>
<comment type="function">
    <molecule>Non-structural protein 1'</molecule>
    <text evidence="10">May play a role in neuroinvasiveness.</text>
</comment>
<comment type="subunit">
    <molecule>Capsid protein C</molecule>
    <text evidence="5 11">Homodimer. Interacts (via N-terminus) with host EXOC1 (via C-terminus); this interaction results in EXOC1 degradation through the proteasome degradation pathway (By similarity). Interacts with host CAPRIN1; this interaction is involved in the suppression of the integrated stress response (PubMed:23097442).</text>
</comment>
<comment type="subunit">
    <molecule>Protein prM</molecule>
    <text evidence="5">Forms heterodimers with envelope protein E in the endoplasmic reticulum and Golgi.</text>
</comment>
<comment type="subunit">
    <molecule>Envelope protein E</molecule>
    <text evidence="5">Homodimer; in the endoplasmic reticulum and Golgi. Interacts with protein prM. Interacts with non-structural protein 1.</text>
</comment>
<comment type="subcellular location">
    <molecule>Peptide pr</molecule>
    <subcellularLocation>
        <location evidence="5">Secreted</location>
    </subcellularLocation>
</comment>
<comment type="subcellular location">
    <molecule>Small envelope protein M</molecule>
    <subcellularLocation>
        <location evidence="1">Virion membrane</location>
        <topology evidence="1">Multi-pass membrane protein</topology>
    </subcellularLocation>
    <subcellularLocation>
        <location evidence="1">Host endoplasmic reticulum membrane</location>
        <topology evidence="8">Multi-pass membrane protein</topology>
    </subcellularLocation>
    <text evidence="1">ER membrane retention is mediated by the transmembrane domains.</text>
</comment>
<comment type="subcellular location">
    <molecule>Envelope protein E</molecule>
    <subcellularLocation>
        <location evidence="13">Virion membrane</location>
        <topology evidence="1">Multi-pass membrane protein</topology>
    </subcellularLocation>
    <subcellularLocation>
        <location evidence="1">Host endoplasmic reticulum membrane</location>
        <topology evidence="8">Multi-pass membrane protein</topology>
    </subcellularLocation>
    <text evidence="1">ER membrane retention is mediated by the transmembrane domains.</text>
</comment>
<comment type="subcellular location">
    <molecule>Non-structural protein 1'</molecule>
    <subcellularLocation>
        <location evidence="5">Secreted</location>
    </subcellularLocation>
    <subcellularLocation>
        <location>Host endoplasmic reticulum membrane</location>
        <topology>Peripheral membrane protein</topology>
        <orientation evidence="5">Lumenal side</orientation>
    </subcellularLocation>
    <text evidence="7">Located in RE-derived vesicles hosting the replication complex.</text>
</comment>
<comment type="alternative products">
    <event type="ribosomal frameshifting"/>
    <isoform>
        <id>P0DOH8-1</id>
        <name>Structural polyprotein</name>
        <sequence type="displayed"/>
    </isoform>
    <isoform>
        <id>P32886-1</id>
        <name>Genome polyprotein</name>
        <sequence type="external"/>
    </isoform>
</comment>
<comment type="domain">
    <text evidence="5">The transmembrane domains of the small envelope protein M and envelope protein E contain an endoplasmic reticulum retention signal.</text>
</comment>
<comment type="PTM">
    <text evidence="5">Genome polyprotein: Specific enzymatic cleavages in vivo yield mature proteins. Cleavages in the lumen of endoplasmic reticulum are performed by host signal peptidase, whereas cleavages in the cytoplasmic side are performed by serine protease NS3. Signal cleavage at the 2K-4B site requires a prior NS3 protease-mediated cleavage at the 4A-2K site.</text>
</comment>
<comment type="PTM">
    <molecule>Protein prM</molecule>
    <text evidence="5">Cleaved in post-Golgi vesicles by a host furin, releasing the mature small envelope protein M, and peptide pr. This cleavage is incomplete as up to 30% of viral particles still carry uncleaved prM.</text>
</comment>
<comment type="PTM">
    <molecule>Envelope protein E</molecule>
    <text evidence="5">N-glycosylated.</text>
</comment>
<comment type="miscellaneous">
    <molecule>Isoform Structural polyprotein</molecule>
    <text evidence="10 12 14">Product of a -1 ribosomal frameshifting.</text>
</comment>
<keyword id="KW-0167">Capsid protein</keyword>
<keyword id="KW-1165">Clathrin-mediated endocytosis of virus by host</keyword>
<keyword id="KW-0165">Cleavage on pair of basic residues</keyword>
<keyword id="KW-1015">Disulfide bond</keyword>
<keyword id="KW-1170">Fusion of virus membrane with host endosomal membrane</keyword>
<keyword id="KW-1168">Fusion of virus membrane with host membrane</keyword>
<keyword id="KW-0325">Glycoprotein</keyword>
<keyword id="KW-1038">Host endoplasmic reticulum</keyword>
<keyword id="KW-1043">Host membrane</keyword>
<keyword id="KW-0945">Host-virus interaction</keyword>
<keyword id="KW-0472">Membrane</keyword>
<keyword id="KW-0688">Ribosomal frameshifting</keyword>
<keyword id="KW-0964">Secreted</keyword>
<keyword id="KW-0812">Transmembrane</keyword>
<keyword id="KW-1133">Transmembrane helix</keyword>
<keyword id="KW-1161">Viral attachment to host cell</keyword>
<keyword id="KW-0261">Viral envelope protein</keyword>
<keyword id="KW-1162">Viral penetration into host cytoplasm</keyword>
<keyword id="KW-0946">Virion</keyword>
<keyword id="KW-1164">Virus endocytosis by host</keyword>
<keyword id="KW-1160">Virus entry into host cell</keyword>
<name>POLS_JAEVJ</name>
<protein>
    <recommendedName>
        <fullName>Structural polyprotein</fullName>
    </recommendedName>
    <component>
        <recommendedName>
            <fullName>Capsid protein C</fullName>
        </recommendedName>
        <alternativeName>
            <fullName>Core protein</fullName>
        </alternativeName>
    </component>
    <component>
        <recommendedName>
            <fullName>Protein prM</fullName>
        </recommendedName>
    </component>
    <component>
        <recommendedName>
            <fullName>Peptide pr</fullName>
        </recommendedName>
    </component>
    <component>
        <recommendedName>
            <fullName>Small envelope protein M</fullName>
        </recommendedName>
        <alternativeName>
            <fullName>Matrix protein</fullName>
        </alternativeName>
    </component>
    <component>
        <recommendedName>
            <fullName>Envelope protein E</fullName>
        </recommendedName>
    </component>
    <component>
        <recommendedName>
            <fullName>Non-structural protein 1'</fullName>
            <shortName>NS1'</shortName>
        </recommendedName>
    </component>
</protein>
<feature type="chain" id="PRO_0000441966" description="Structural polyprotein">
    <location>
        <begin position="1"/>
        <end position="1198"/>
    </location>
</feature>
<feature type="chain" id="PRO_0000441994" description="Capsid protein C" evidence="2">
    <location>
        <begin position="1"/>
        <end position="105"/>
    </location>
</feature>
<feature type="propeptide" id="PRO_0000441995" description="ER anchor for the capsid protein C, removed in mature form by serine protease NS3" evidence="2">
    <location>
        <begin position="106"/>
        <end position="127"/>
    </location>
</feature>
<feature type="chain" id="PRO_0000441996" description="Protein prM" evidence="2">
    <location>
        <begin position="128"/>
        <end position="294"/>
    </location>
</feature>
<feature type="chain" id="PRO_0000441997" description="Peptide pr" evidence="2">
    <location>
        <begin position="128"/>
        <end position="219"/>
    </location>
</feature>
<feature type="chain" id="PRO_0000441998" description="Small envelope protein M" evidence="2">
    <location>
        <begin position="220"/>
        <end position="294"/>
    </location>
</feature>
<feature type="chain" id="PRO_0000441999" description="Envelope protein E" evidence="2">
    <location>
        <begin position="295"/>
        <end position="794"/>
    </location>
</feature>
<feature type="chain" id="PRO_0000441967" description="Non-structural protein 1'">
    <location>
        <begin position="795"/>
        <end position="1198"/>
    </location>
</feature>
<feature type="topological domain" description="Cytoplasmic" evidence="8">
    <location>
        <begin position="2"/>
        <end position="109"/>
    </location>
</feature>
<feature type="transmembrane region" description="Helical" evidence="8">
    <location>
        <begin position="110"/>
        <end position="130"/>
    </location>
</feature>
<feature type="topological domain" description="Extracellular" evidence="8">
    <location>
        <begin position="131"/>
        <end position="253"/>
    </location>
</feature>
<feature type="transmembrane region" description="Helical" evidence="8">
    <location>
        <begin position="254"/>
        <end position="274"/>
    </location>
</feature>
<feature type="topological domain" description="Cytoplasmic" evidence="8">
    <location>
        <begin position="275"/>
        <end position="279"/>
    </location>
</feature>
<feature type="transmembrane region" description="Helical" evidence="13">
    <location>
        <begin position="280"/>
        <end position="294"/>
    </location>
</feature>
<feature type="topological domain" description="Extracellular" evidence="8">
    <location>
        <begin position="295"/>
        <end position="746"/>
    </location>
</feature>
<feature type="transmembrane region" description="Helical" evidence="8">
    <location>
        <begin position="747"/>
        <end position="767"/>
    </location>
</feature>
<feature type="topological domain" description="Cytoplasmic" evidence="8">
    <location>
        <begin position="768"/>
        <end position="773"/>
    </location>
</feature>
<feature type="transmembrane region" description="Helical" evidence="8">
    <location>
        <begin position="774"/>
        <end position="794"/>
    </location>
</feature>
<feature type="topological domain" description="Extracellular" evidence="8">
    <location>
        <begin position="795"/>
        <end position="1198"/>
    </location>
</feature>
<feature type="region of interest" description="Interaction with host EXOC1" evidence="2">
    <location>
        <begin position="2"/>
        <end position="15"/>
    </location>
</feature>
<feature type="region of interest" description="Hydrophobic; homodimerization of capsid protein C" evidence="6">
    <location>
        <begin position="37"/>
        <end position="72"/>
    </location>
</feature>
<feature type="region of interest" description="Fusion peptide" evidence="4">
    <location>
        <begin position="392"/>
        <end position="405"/>
    </location>
</feature>
<feature type="region of interest" description="Disordered" evidence="9">
    <location>
        <begin position="1152"/>
        <end position="1177"/>
    </location>
</feature>
<feature type="site" description="Cleavage; by viral protease NS3" evidence="2">
    <location>
        <begin position="105"/>
        <end position="106"/>
    </location>
</feature>
<feature type="site" description="Cleavage; by host signal peptidase" evidence="2">
    <location>
        <begin position="127"/>
        <end position="128"/>
    </location>
</feature>
<feature type="site" description="Cleavage; by host furin" evidence="2">
    <location>
        <begin position="219"/>
        <end position="220"/>
    </location>
</feature>
<feature type="site" description="Cleavage; by host signal peptidase" evidence="2">
    <location>
        <begin position="294"/>
        <end position="295"/>
    </location>
</feature>
<feature type="site" description="Cleavage; by host signal peptidase" evidence="2">
    <location>
        <begin position="794"/>
        <end position="795"/>
    </location>
</feature>
<feature type="glycosylation site" description="N-linked (GlcNAc...) asparagine; by host" evidence="3">
    <location>
        <position position="142"/>
    </location>
</feature>
<feature type="glycosylation site" description="N-linked (GlcNAc...) asparagine; by host" evidence="8">
    <location>
        <position position="448"/>
    </location>
</feature>
<feature type="glycosylation site" description="N-linked (GlcNAc...) asparagine; by host" evidence="7">
    <location>
        <position position="924"/>
    </location>
</feature>
<feature type="glycosylation site" description="N-linked (GlcNAc...) asparagine; by host" evidence="7">
    <location>
        <position position="1001"/>
    </location>
</feature>
<feature type="disulfide bond" evidence="7">
    <location>
        <begin position="297"/>
        <end position="324"/>
    </location>
</feature>
<feature type="disulfide bond" evidence="7">
    <location>
        <begin position="354"/>
        <end position="415"/>
    </location>
</feature>
<feature type="disulfide bond" evidence="2">
    <location>
        <begin position="354"/>
        <end position="410"/>
    </location>
</feature>
<feature type="disulfide bond" evidence="7">
    <location>
        <begin position="368"/>
        <end position="399"/>
    </location>
</feature>
<feature type="disulfide bond" evidence="2">
    <location>
        <begin position="386"/>
        <end position="415"/>
    </location>
</feature>
<feature type="disulfide bond" evidence="7">
    <location>
        <begin position="386"/>
        <end position="410"/>
    </location>
</feature>
<feature type="disulfide bond" evidence="7">
    <location>
        <begin position="484"/>
        <end position="581"/>
    </location>
</feature>
<feature type="disulfide bond" evidence="7">
    <location>
        <begin position="598"/>
        <end position="629"/>
    </location>
</feature>
<feature type="disulfide bond" evidence="7">
    <location>
        <begin position="798"/>
        <end position="809"/>
    </location>
</feature>
<feature type="disulfide bond" evidence="7">
    <location>
        <begin position="849"/>
        <end position="937"/>
    </location>
</feature>
<feature type="disulfide bond" evidence="7">
    <location>
        <begin position="973"/>
        <end position="1017"/>
    </location>
</feature>
<feature type="disulfide bond" evidence="7">
    <location>
        <begin position="1074"/>
        <end position="1123"/>
    </location>
</feature>
<feature type="disulfide bond" evidence="7">
    <location>
        <begin position="1085"/>
        <end position="1106"/>
    </location>
</feature>
<feature type="disulfide bond" evidence="7">
    <location>
        <begin position="1107"/>
        <end position="1110"/>
    </location>
</feature>
<feature type="mutagenesis site" description="Complete loss of inhibition of the host stress granules formation." evidence="11">
    <original>KR</original>
    <variation>AA</variation>
    <location>
        <begin position="97"/>
        <end position="98"/>
    </location>
</feature>
<proteinExistence type="evidence at protein level"/>
<sequence length="1198" mass="131521">MTKKPGGPGKNRAINMLKRGLPRVFPLVGVKRVVMSLLDGRGPVRFVLALITFFKFTALAPTKALLGRWKAVEKSVAMKHLTSFKRELGTLIDAVNKRGRKQNKRGGNEGSIMWLASLAVVIAYAGAMKLSNFQGKLLMTINNTDIADVIVIPTSKGENRCWVRAIDVGYMCEDTITYECPKLTMGNDPEDVDCWCDNQEVYVQYGRCTRTRHSKRSRRSVSVQTHGESSLVNKKEAWLDSTKATRYLMKTENWIIRNPGYAFLAATLGWMLGSNNGQRVVFTILLLLVAPAYSFNCLGMGNRDFIEGASGATWVDLVLEGDSCLTIMANDKPTLDVRMINIEASQLAEVRSYCYHASVTDISTVARCPTTGEAHNEKRADSSYVCKQGFTDRGWGNGCGLFGKGSIDTCAKFSCTSKAIGRTIQPENIKYEVGIFVHGTTTSENHGNYSAQVGASQAAKFTITPNAPSITLKLGDYGEVTLDCEPRSGLNTEAFYVMTVGSKSFLVHREWFHDLALPWTSPSSTAWRNRELLMEFEEAHATKQSVVALGSQEGGLHQALAGAIVVEYSSSVKLTSGHLKCRLKMDKLALKGTTYGMCTEKFSFAKNPADTGHGTVVIELSYSGSDGPCKIPIVSVASLNDMTPVGRLVTVNPFVATSSANSKVLVEMEPPFGDSYIVVGRGDKQINHHWHKAGSTLGKAFSTTLKGAQRLAALGDTAWDFGSIGGVFNSIGKAVHQVFGGAFRTLFGGMSWITQGLMGALLLWMGVNARDRSIALAFLATGGVLVFLATNVHADTGCAIDITRKEMRCGSGIFVHNDVEAWVDRYKYLPETPRSLAKIVHKAHKEGVCGVRSVTRLEHQMWEAVRDELNVLLKENAVDLSVVVNKPVGRYRSAPKRLSMTQEKFEMGWKAWGKSILFAPELANSTFVVDGPETKECPDEHRAWNSMQIEDFGFGITSTRVWLKIREESTDECDGAIIGTAVKGHVAVHSDLSYWIESRYNDTWKLERAVFGEVKSCTWPETHTLWGDGVEESELIIPHTIAGPKSKHNRREGYKTQNQGPWDENGIVLDFDYCPGTKVTITEDCGKRGPSVRTTTDSGKLITDWCCRSCSLPPLRFRTENGCWYGMEIRPVRHDETTLVRSQVDAFNGEMVDPFSAGPSGDVSGHPGGPSQEVDGQIDHSCGFGGPTCADAWGHHLH</sequence>
<dbReference type="EMBL" id="M15337">
    <property type="status" value="NOT_ANNOTATED_CDS"/>
    <property type="molecule type" value="Genomic_RNA"/>
</dbReference>
<dbReference type="EMBL" id="M18370">
    <property type="status" value="NOT_ANNOTATED_CDS"/>
    <property type="molecule type" value="Genomic_RNA"/>
</dbReference>
<dbReference type="SMR" id="P0DOH8"/>
<dbReference type="Proteomes" id="UP000007214">
    <property type="component" value="Segment"/>
</dbReference>
<dbReference type="GO" id="GO:0005576">
    <property type="term" value="C:extracellular region"/>
    <property type="evidence" value="ECO:0007669"/>
    <property type="project" value="UniProtKB-SubCell"/>
</dbReference>
<dbReference type="GO" id="GO:0044167">
    <property type="term" value="C:host cell endoplasmic reticulum membrane"/>
    <property type="evidence" value="ECO:0007669"/>
    <property type="project" value="UniProtKB-SubCell"/>
</dbReference>
<dbReference type="GO" id="GO:0016020">
    <property type="term" value="C:membrane"/>
    <property type="evidence" value="ECO:0007669"/>
    <property type="project" value="UniProtKB-KW"/>
</dbReference>
<dbReference type="GO" id="GO:0019028">
    <property type="term" value="C:viral capsid"/>
    <property type="evidence" value="ECO:0007669"/>
    <property type="project" value="UniProtKB-KW"/>
</dbReference>
<dbReference type="GO" id="GO:0019031">
    <property type="term" value="C:viral envelope"/>
    <property type="evidence" value="ECO:0007669"/>
    <property type="project" value="UniProtKB-KW"/>
</dbReference>
<dbReference type="GO" id="GO:0055036">
    <property type="term" value="C:virion membrane"/>
    <property type="evidence" value="ECO:0007669"/>
    <property type="project" value="UniProtKB-SubCell"/>
</dbReference>
<dbReference type="GO" id="GO:0046983">
    <property type="term" value="F:protein dimerization activity"/>
    <property type="evidence" value="ECO:0007669"/>
    <property type="project" value="InterPro"/>
</dbReference>
<dbReference type="GO" id="GO:0005198">
    <property type="term" value="F:structural molecule activity"/>
    <property type="evidence" value="ECO:0007669"/>
    <property type="project" value="InterPro"/>
</dbReference>
<dbReference type="GO" id="GO:0075512">
    <property type="term" value="P:clathrin-dependent endocytosis of virus by host cell"/>
    <property type="evidence" value="ECO:0007669"/>
    <property type="project" value="UniProtKB-KW"/>
</dbReference>
<dbReference type="GO" id="GO:0039654">
    <property type="term" value="P:fusion of virus membrane with host endosome membrane"/>
    <property type="evidence" value="ECO:0007669"/>
    <property type="project" value="UniProtKB-KW"/>
</dbReference>
<dbReference type="GO" id="GO:0075523">
    <property type="term" value="P:viral translational frameshifting"/>
    <property type="evidence" value="ECO:0007669"/>
    <property type="project" value="UniProtKB-KW"/>
</dbReference>
<dbReference type="GO" id="GO:0019062">
    <property type="term" value="P:virion attachment to host cell"/>
    <property type="evidence" value="ECO:0007669"/>
    <property type="project" value="UniProtKB-KW"/>
</dbReference>
<dbReference type="CDD" id="cd12149">
    <property type="entry name" value="Flavi_E_C"/>
    <property type="match status" value="1"/>
</dbReference>
<dbReference type="CDD" id="cd17038">
    <property type="entry name" value="Flavi_M"/>
    <property type="match status" value="1"/>
</dbReference>
<dbReference type="FunFam" id="1.20.1280.260:FF:000001">
    <property type="entry name" value="Envelope glycoprotein"/>
    <property type="match status" value="1"/>
</dbReference>
<dbReference type="FunFam" id="2.60.40.350:FF:000001">
    <property type="entry name" value="Envelope glycoprotein"/>
    <property type="match status" value="1"/>
</dbReference>
<dbReference type="FunFam" id="2.60.260.50:FF:000001">
    <property type="entry name" value="Genome polyprotein"/>
    <property type="match status" value="1"/>
</dbReference>
<dbReference type="Gene3D" id="1.10.10.930">
    <property type="match status" value="1"/>
</dbReference>
<dbReference type="Gene3D" id="1.20.1280.260">
    <property type="match status" value="1"/>
</dbReference>
<dbReference type="Gene3D" id="2.60.40.350">
    <property type="match status" value="1"/>
</dbReference>
<dbReference type="Gene3D" id="1.10.8.970">
    <property type="entry name" value="Flavivirus envelope glycoprotein M-like"/>
    <property type="match status" value="1"/>
</dbReference>
<dbReference type="Gene3D" id="2.60.260.50">
    <property type="entry name" value="Flavivirus polyprotein propeptide domain"/>
    <property type="match status" value="1"/>
</dbReference>
<dbReference type="Gene3D" id="2.60.98.10">
    <property type="entry name" value="Tick-borne Encephalitis virus Glycoprotein, domain 1"/>
    <property type="match status" value="1"/>
</dbReference>
<dbReference type="Gene3D" id="3.30.67.10">
    <property type="entry name" value="Viral Envelope Glycoprotein, domain 2"/>
    <property type="match status" value="1"/>
</dbReference>
<dbReference type="Gene3D" id="3.30.387.10">
    <property type="entry name" value="Viral Envelope Glycoprotein, domain 3"/>
    <property type="match status" value="1"/>
</dbReference>
<dbReference type="InterPro" id="IPR000069">
    <property type="entry name" value="Env_glycoprot_M_flavivir"/>
</dbReference>
<dbReference type="InterPro" id="IPR038302">
    <property type="entry name" value="Env_glycoprot_M_sf_flavivir"/>
</dbReference>
<dbReference type="InterPro" id="IPR013755">
    <property type="entry name" value="Flav_gly_cen_dom_subdom1"/>
</dbReference>
<dbReference type="InterPro" id="IPR001122">
    <property type="entry name" value="Flavi_capsidC"/>
</dbReference>
<dbReference type="InterPro" id="IPR037172">
    <property type="entry name" value="Flavi_capsidC_sf"/>
</dbReference>
<dbReference type="InterPro" id="IPR027287">
    <property type="entry name" value="Flavi_E_Ig-like"/>
</dbReference>
<dbReference type="InterPro" id="IPR026470">
    <property type="entry name" value="Flavi_E_Stem/Anchor_dom"/>
</dbReference>
<dbReference type="InterPro" id="IPR038345">
    <property type="entry name" value="Flavi_E_Stem/Anchor_dom_sf"/>
</dbReference>
<dbReference type="InterPro" id="IPR011998">
    <property type="entry name" value="Flavi_Glycoprot_E_cen/dimer"/>
</dbReference>
<dbReference type="InterPro" id="IPR001157">
    <property type="entry name" value="Flavi_NS1"/>
</dbReference>
<dbReference type="InterPro" id="IPR002535">
    <property type="entry name" value="Flavi_propep"/>
</dbReference>
<dbReference type="InterPro" id="IPR038688">
    <property type="entry name" value="Flavi_propep_sf"/>
</dbReference>
<dbReference type="InterPro" id="IPR000336">
    <property type="entry name" value="Flavivir/Alphavir_Ig-like_sf"/>
</dbReference>
<dbReference type="InterPro" id="IPR036253">
    <property type="entry name" value="Glycoprot_cen/dimer_sf"/>
</dbReference>
<dbReference type="InterPro" id="IPR038055">
    <property type="entry name" value="Glycoprot_E_dimer_dom"/>
</dbReference>
<dbReference type="InterPro" id="IPR013756">
    <property type="entry name" value="GlyE_cen_dom_subdom2"/>
</dbReference>
<dbReference type="InterPro" id="IPR014756">
    <property type="entry name" value="Ig_E-set"/>
</dbReference>
<dbReference type="NCBIfam" id="TIGR04240">
    <property type="entry name" value="flavi_E_stem"/>
    <property type="match status" value="1"/>
</dbReference>
<dbReference type="Pfam" id="PF01003">
    <property type="entry name" value="Flavi_capsid"/>
    <property type="match status" value="1"/>
</dbReference>
<dbReference type="Pfam" id="PF21659">
    <property type="entry name" value="Flavi_E_stem"/>
    <property type="match status" value="1"/>
</dbReference>
<dbReference type="Pfam" id="PF02832">
    <property type="entry name" value="Flavi_glycop_C"/>
    <property type="match status" value="1"/>
</dbReference>
<dbReference type="Pfam" id="PF00869">
    <property type="entry name" value="Flavi_glycoprot"/>
    <property type="match status" value="1"/>
</dbReference>
<dbReference type="Pfam" id="PF01004">
    <property type="entry name" value="Flavi_M"/>
    <property type="match status" value="1"/>
</dbReference>
<dbReference type="Pfam" id="PF00948">
    <property type="entry name" value="Flavi_NS1"/>
    <property type="match status" value="1"/>
</dbReference>
<dbReference type="Pfam" id="PF01570">
    <property type="entry name" value="Flavi_propep"/>
    <property type="match status" value="1"/>
</dbReference>
<dbReference type="SUPFAM" id="SSF81296">
    <property type="entry name" value="E set domains"/>
    <property type="match status" value="1"/>
</dbReference>
<dbReference type="SUPFAM" id="SSF101257">
    <property type="entry name" value="Flavivirus capsid protein C"/>
    <property type="match status" value="1"/>
</dbReference>
<dbReference type="SUPFAM" id="SSF56983">
    <property type="entry name" value="Viral glycoprotein, central and dimerisation domains"/>
    <property type="match status" value="1"/>
</dbReference>
<reference key="1">
    <citation type="journal article" date="1987" name="Virology">
        <title>Complete nucleotide sequence of the Japanese encephalitis virus genome RNA.</title>
        <authorList>
            <person name="Sumiyoshi H."/>
            <person name="Mori C."/>
            <person name="Fuke I."/>
            <person name="Morita K."/>
            <person name="Kuhara S."/>
            <person name="Kondou J."/>
            <person name="Kikuchi Y."/>
            <person name="Nagamatu H."/>
            <person name="Igarashi A."/>
        </authorList>
    </citation>
    <scope>NUCLEOTIDE SEQUENCE [GENOMIC RNA]</scope>
</reference>
<reference key="2">
    <citation type="journal article" date="1986" name="Gene">
        <title>Sequence of 3000 nucleotides at the 5' end of Japanese encephalitis virus RNA.</title>
        <authorList>
            <person name="Sumiyoshi H."/>
            <person name="Morita K."/>
            <person name="Mori C."/>
            <person name="Fuke I."/>
            <person name="Shiba T."/>
            <person name="Sakaki Y."/>
            <person name="Igarashi A."/>
        </authorList>
    </citation>
    <scope>NUCLEOTIDE SEQUENCE [GENOMIC RNA] OF 1-969</scope>
</reference>
<reference key="3">
    <citation type="journal article" date="1989" name="Virology">
        <title>Maturation of Japanese encephalitis virus glycoproteins produced by infected mammalian and mosquito cells.</title>
        <authorList>
            <person name="Mason P.W."/>
        </authorList>
    </citation>
    <scope>CHARACTERIZATION</scope>
</reference>
<reference key="4">
    <citation type="journal article" date="2009" name="Virol. J.">
        <title>A conserved predicted pseudoknot in the NS2A-encoding sequence of West Nile and Japanese encephalitis flaviviruses suggests NS1' may derive from ribosomal frameshifting.</title>
        <authorList>
            <person name="Firth A.E."/>
            <person name="Atkins J.F."/>
        </authorList>
    </citation>
    <scope>RIBOSOMAL FRAMESHIFTING</scope>
</reference>
<reference key="5">
    <citation type="journal article" date="2010" name="J. Virol.">
        <title>NS1' of flaviviruses in the Japanese encephalitis virus serogroup is a product of ribosomal frameshifting and plays a role in viral neuroinvasiveness.</title>
        <authorList>
            <person name="Melian E.B."/>
            <person name="Hinzman E."/>
            <person name="Nagasaki T."/>
            <person name="Firth A.E."/>
            <person name="Wills N.M."/>
            <person name="Nouwens A.S."/>
            <person name="Blitvich B.J."/>
            <person name="Leung J."/>
            <person name="Funk A."/>
            <person name="Atkins J.F."/>
            <person name="Hall R."/>
            <person name="Khromykh A.A."/>
        </authorList>
    </citation>
    <scope>RIBOSOMAL FRAMESHIFTING</scope>
    <scope>FUNCTION (NS1')</scope>
</reference>
<reference key="6">
    <citation type="journal article" date="2013" name="J. Virol.">
        <title>Japanese encephalitis virus core protein inhibits stress granule formation through an interaction with Caprin-1 and facilitates viral propagation.</title>
        <authorList>
            <person name="Katoh H."/>
            <person name="Okamoto T."/>
            <person name="Fukuhara T."/>
            <person name="Kambara H."/>
            <person name="Morita E."/>
            <person name="Mori Y."/>
            <person name="Kamitani W."/>
            <person name="Matsuura Y."/>
        </authorList>
    </citation>
    <scope>FUNCTION (CAPSID PROTEIN C)</scope>
    <scope>MUTAGENESIS OF 97-LYS-ARG-98</scope>
    <scope>INTERACTION WITH HOST CAPRIN1</scope>
    <source>
        <strain>AT31</strain>
    </source>
</reference>
<evidence type="ECO:0000250" key="1">
    <source>
        <dbReference type="UniProtKB" id="P03314"/>
    </source>
</evidence>
<evidence type="ECO:0000250" key="2">
    <source>
        <dbReference type="UniProtKB" id="P06935"/>
    </source>
</evidence>
<evidence type="ECO:0000250" key="3">
    <source>
        <dbReference type="UniProtKB" id="P14335"/>
    </source>
</evidence>
<evidence type="ECO:0000250" key="4">
    <source>
        <dbReference type="UniProtKB" id="P14336"/>
    </source>
</evidence>
<evidence type="ECO:0000250" key="5">
    <source>
        <dbReference type="UniProtKB" id="P17763"/>
    </source>
</evidence>
<evidence type="ECO:0000250" key="6">
    <source>
        <dbReference type="UniProtKB" id="P29990"/>
    </source>
</evidence>
<evidence type="ECO:0000250" key="7">
    <source>
        <dbReference type="UniProtKB" id="Q9Q6P4"/>
    </source>
</evidence>
<evidence type="ECO:0000255" key="8"/>
<evidence type="ECO:0000256" key="9">
    <source>
        <dbReference type="SAM" id="MobiDB-lite"/>
    </source>
</evidence>
<evidence type="ECO:0000269" key="10">
    <source>
    </source>
</evidence>
<evidence type="ECO:0000269" key="11">
    <source>
    </source>
</evidence>
<evidence type="ECO:0000269" key="12">
    <source>
    </source>
</evidence>
<evidence type="ECO:0000305" key="13"/>
<evidence type="ECO:0000305" key="14">
    <source>
    </source>
</evidence>
<organism>
    <name type="scientific">Japanese encephalitis virus (strain Jaoars982)</name>
    <name type="common">JEV</name>
    <dbReference type="NCBI Taxonomy" id="11075"/>
    <lineage>
        <taxon>Viruses</taxon>
        <taxon>Riboviria</taxon>
        <taxon>Orthornavirae</taxon>
        <taxon>Kitrinoviricota</taxon>
        <taxon>Flasuviricetes</taxon>
        <taxon>Amarillovirales</taxon>
        <taxon>Flaviviridae</taxon>
        <taxon>Orthoflavivirus</taxon>
        <taxon>Orthoflavivirus japonicum</taxon>
    </lineage>
</organism>
<organismHost>
    <name type="scientific">Ardeidae</name>
    <name type="common">herons</name>
    <dbReference type="NCBI Taxonomy" id="8899"/>
</organismHost>
<organismHost>
    <name type="scientific">Bos taurus</name>
    <name type="common">Bovine</name>
    <dbReference type="NCBI Taxonomy" id="9913"/>
</organismHost>
<organismHost>
    <name type="scientific">Culex gelidus</name>
    <dbReference type="NCBI Taxonomy" id="308713"/>
</organismHost>
<organismHost>
    <name type="scientific">Culex tritaeniorhynchus</name>
    <name type="common">Mosquito</name>
    <dbReference type="NCBI Taxonomy" id="7178"/>
</organismHost>
<organismHost>
    <name type="scientific">Equus caballus</name>
    <name type="common">Horse</name>
    <dbReference type="NCBI Taxonomy" id="9796"/>
</organismHost>
<organismHost>
    <name type="scientific">Homo sapiens</name>
    <name type="common">Human</name>
    <dbReference type="NCBI Taxonomy" id="9606"/>
</organismHost>
<organismHost>
    <name type="scientific">Sus scrofa</name>
    <name type="common">Pig</name>
    <dbReference type="NCBI Taxonomy" id="9823"/>
</organismHost>
<accession>P0DOH8</accession>